<comment type="catalytic activity">
    <reaction evidence="1">
        <text>5-amino-1-(5-phospho-D-ribosyl)imidazole-4-carboxylate + L-aspartate + ATP = (2S)-2-[5-amino-1-(5-phospho-beta-D-ribosyl)imidazole-4-carboxamido]succinate + ADP + phosphate + 2 H(+)</text>
        <dbReference type="Rhea" id="RHEA:22628"/>
        <dbReference type="ChEBI" id="CHEBI:15378"/>
        <dbReference type="ChEBI" id="CHEBI:29991"/>
        <dbReference type="ChEBI" id="CHEBI:30616"/>
        <dbReference type="ChEBI" id="CHEBI:43474"/>
        <dbReference type="ChEBI" id="CHEBI:58443"/>
        <dbReference type="ChEBI" id="CHEBI:77657"/>
        <dbReference type="ChEBI" id="CHEBI:456216"/>
        <dbReference type="EC" id="6.3.2.6"/>
    </reaction>
</comment>
<comment type="pathway">
    <text evidence="1">Purine metabolism; IMP biosynthesis via de novo pathway; 5-amino-1-(5-phospho-D-ribosyl)imidazole-4-carboxamide from 5-amino-1-(5-phospho-D-ribosyl)imidazole-4-carboxylate: step 1/2.</text>
</comment>
<comment type="similarity">
    <text evidence="1">Belongs to the SAICAR synthetase family.</text>
</comment>
<accession>Q8DWL6</accession>
<keyword id="KW-0067">ATP-binding</keyword>
<keyword id="KW-0436">Ligase</keyword>
<keyword id="KW-0547">Nucleotide-binding</keyword>
<keyword id="KW-0658">Purine biosynthesis</keyword>
<keyword id="KW-1185">Reference proteome</keyword>
<feature type="chain" id="PRO_0000100881" description="Phosphoribosylaminoimidazole-succinocarboxamide synthase">
    <location>
        <begin position="1"/>
        <end position="235"/>
    </location>
</feature>
<protein>
    <recommendedName>
        <fullName evidence="1">Phosphoribosylaminoimidazole-succinocarboxamide synthase</fullName>
        <ecNumber evidence="1">6.3.2.6</ecNumber>
    </recommendedName>
    <alternativeName>
        <fullName evidence="1">SAICAR synthetase</fullName>
    </alternativeName>
</protein>
<dbReference type="EC" id="6.3.2.6" evidence="1"/>
<dbReference type="EMBL" id="AE014133">
    <property type="protein sequence ID" value="AAN57818.1"/>
    <property type="molecule type" value="Genomic_DNA"/>
</dbReference>
<dbReference type="RefSeq" id="NP_720512.1">
    <property type="nucleotide sequence ID" value="NC_004350.2"/>
</dbReference>
<dbReference type="RefSeq" id="WP_002263133.1">
    <property type="nucleotide sequence ID" value="NC_004350.2"/>
</dbReference>
<dbReference type="SMR" id="Q8DWL6"/>
<dbReference type="STRING" id="210007.SMU_29"/>
<dbReference type="GeneID" id="93860417"/>
<dbReference type="KEGG" id="smu:SMU_29"/>
<dbReference type="PATRIC" id="fig|210007.7.peg.24"/>
<dbReference type="eggNOG" id="COG0152">
    <property type="taxonomic scope" value="Bacteria"/>
</dbReference>
<dbReference type="HOGENOM" id="CLU_061495_2_0_9"/>
<dbReference type="OrthoDB" id="9801549at2"/>
<dbReference type="PhylomeDB" id="Q8DWL6"/>
<dbReference type="UniPathway" id="UPA00074">
    <property type="reaction ID" value="UER00131"/>
</dbReference>
<dbReference type="Proteomes" id="UP000002512">
    <property type="component" value="Chromosome"/>
</dbReference>
<dbReference type="GO" id="GO:0005524">
    <property type="term" value="F:ATP binding"/>
    <property type="evidence" value="ECO:0007669"/>
    <property type="project" value="UniProtKB-KW"/>
</dbReference>
<dbReference type="GO" id="GO:0004639">
    <property type="term" value="F:phosphoribosylaminoimidazolesuccinocarboxamide synthase activity"/>
    <property type="evidence" value="ECO:0007669"/>
    <property type="project" value="UniProtKB-UniRule"/>
</dbReference>
<dbReference type="GO" id="GO:0006189">
    <property type="term" value="P:'de novo' IMP biosynthetic process"/>
    <property type="evidence" value="ECO:0007669"/>
    <property type="project" value="UniProtKB-UniRule"/>
</dbReference>
<dbReference type="GO" id="GO:0009236">
    <property type="term" value="P:cobalamin biosynthetic process"/>
    <property type="evidence" value="ECO:0007669"/>
    <property type="project" value="InterPro"/>
</dbReference>
<dbReference type="CDD" id="cd01415">
    <property type="entry name" value="SAICAR_synt_PurC"/>
    <property type="match status" value="1"/>
</dbReference>
<dbReference type="FunFam" id="3.30.200.20:FF:000189">
    <property type="entry name" value="Phosphoribosylaminoimidazole-succinocarboxamide synthase"/>
    <property type="match status" value="1"/>
</dbReference>
<dbReference type="FunFam" id="3.30.470.20:FF:000006">
    <property type="entry name" value="Phosphoribosylaminoimidazole-succinocarboxamide synthase"/>
    <property type="match status" value="1"/>
</dbReference>
<dbReference type="Gene3D" id="3.30.470.20">
    <property type="entry name" value="ATP-grasp fold, B domain"/>
    <property type="match status" value="1"/>
</dbReference>
<dbReference type="Gene3D" id="3.30.200.20">
    <property type="entry name" value="Phosphorylase Kinase, domain 1"/>
    <property type="match status" value="1"/>
</dbReference>
<dbReference type="HAMAP" id="MF_00137">
    <property type="entry name" value="SAICAR_synth"/>
    <property type="match status" value="1"/>
</dbReference>
<dbReference type="InterPro" id="IPR028923">
    <property type="entry name" value="SAICAR_synt/ADE2_N"/>
</dbReference>
<dbReference type="InterPro" id="IPR033934">
    <property type="entry name" value="SAICAR_synt_PurC"/>
</dbReference>
<dbReference type="InterPro" id="IPR001636">
    <property type="entry name" value="SAICAR_synth"/>
</dbReference>
<dbReference type="InterPro" id="IPR050089">
    <property type="entry name" value="SAICAR_synthetase"/>
</dbReference>
<dbReference type="InterPro" id="IPR018236">
    <property type="entry name" value="SAICAR_synthetase_CS"/>
</dbReference>
<dbReference type="NCBIfam" id="TIGR00081">
    <property type="entry name" value="purC"/>
    <property type="match status" value="1"/>
</dbReference>
<dbReference type="PANTHER" id="PTHR43599">
    <property type="entry name" value="MULTIFUNCTIONAL PROTEIN ADE2"/>
    <property type="match status" value="1"/>
</dbReference>
<dbReference type="PANTHER" id="PTHR43599:SF3">
    <property type="entry name" value="SI:DKEY-6E2.2"/>
    <property type="match status" value="1"/>
</dbReference>
<dbReference type="Pfam" id="PF01259">
    <property type="entry name" value="SAICAR_synt"/>
    <property type="match status" value="1"/>
</dbReference>
<dbReference type="SUPFAM" id="SSF56104">
    <property type="entry name" value="SAICAR synthase-like"/>
    <property type="match status" value="1"/>
</dbReference>
<dbReference type="PROSITE" id="PS01057">
    <property type="entry name" value="SAICAR_SYNTHETASE_1"/>
    <property type="match status" value="1"/>
</dbReference>
<dbReference type="PROSITE" id="PS01058">
    <property type="entry name" value="SAICAR_SYNTHETASE_2"/>
    <property type="match status" value="1"/>
</dbReference>
<name>PUR7_STRMU</name>
<sequence length="235" mass="26975">MAKELIYSGKAKDILTTEDENVIIAQYKDQATALNGVKKEQIAGKGQLNNQISSLIFQKLNAAGVATHFIKKISETEQLNKKVKIIPLEVVLRNVTAGSFSKRFGVKEGIQLEKPIVEFYYKNDDLDDPFINDEHVKFLKLANDEDIAYIKAETRRINKLLSDWFHQIGLKLIDFKLEFGFDKDGKIILADEFSPDNCRLWDAQGHHMDKDVFRRGLGELTDVYEVVWEKLQELK</sequence>
<evidence type="ECO:0000255" key="1">
    <source>
        <dbReference type="HAMAP-Rule" id="MF_00137"/>
    </source>
</evidence>
<organism>
    <name type="scientific">Streptococcus mutans serotype c (strain ATCC 700610 / UA159)</name>
    <dbReference type="NCBI Taxonomy" id="210007"/>
    <lineage>
        <taxon>Bacteria</taxon>
        <taxon>Bacillati</taxon>
        <taxon>Bacillota</taxon>
        <taxon>Bacilli</taxon>
        <taxon>Lactobacillales</taxon>
        <taxon>Streptococcaceae</taxon>
        <taxon>Streptococcus</taxon>
    </lineage>
</organism>
<reference key="1">
    <citation type="journal article" date="2002" name="Proc. Natl. Acad. Sci. U.S.A.">
        <title>Genome sequence of Streptococcus mutans UA159, a cariogenic dental pathogen.</title>
        <authorList>
            <person name="Ajdic D.J."/>
            <person name="McShan W.M."/>
            <person name="McLaughlin R.E."/>
            <person name="Savic G."/>
            <person name="Chang J."/>
            <person name="Carson M.B."/>
            <person name="Primeaux C."/>
            <person name="Tian R."/>
            <person name="Kenton S."/>
            <person name="Jia H.G."/>
            <person name="Lin S.P."/>
            <person name="Qian Y."/>
            <person name="Li S."/>
            <person name="Zhu H."/>
            <person name="Najar F.Z."/>
            <person name="Lai H."/>
            <person name="White J."/>
            <person name="Roe B.A."/>
            <person name="Ferretti J.J."/>
        </authorList>
    </citation>
    <scope>NUCLEOTIDE SEQUENCE [LARGE SCALE GENOMIC DNA]</scope>
    <source>
        <strain>ATCC 700610 / UA159</strain>
    </source>
</reference>
<gene>
    <name evidence="1" type="primary">purC</name>
    <name type="ordered locus">SMU_29</name>
</gene>
<proteinExistence type="inferred from homology"/>